<dbReference type="EC" id="3.2.1.23"/>
<dbReference type="EMBL" id="AM920421">
    <property type="protein sequence ID" value="CAP79053.1"/>
    <property type="status" value="ALT_SEQ"/>
    <property type="molecule type" value="Genomic_DNA"/>
</dbReference>
<dbReference type="RefSeq" id="XP_002556674.1">
    <property type="nucleotide sequence ID" value="XM_002556628.1"/>
</dbReference>
<dbReference type="SMR" id="B6GW04"/>
<dbReference type="STRING" id="500485.B6GW04"/>
<dbReference type="CAZy" id="GH35">
    <property type="family name" value="Glycoside Hydrolase Family 35"/>
</dbReference>
<dbReference type="GlyCosmos" id="B6GW04">
    <property type="glycosylation" value="9 sites, No reported glycans"/>
</dbReference>
<dbReference type="eggNOG" id="KOG0496">
    <property type="taxonomic scope" value="Eukaryota"/>
</dbReference>
<dbReference type="HOGENOM" id="CLU_005732_2_0_1"/>
<dbReference type="OrthoDB" id="1657402at2759"/>
<dbReference type="BioCyc" id="PCHR:PC06G00600-MONOMER"/>
<dbReference type="Proteomes" id="UP000000724">
    <property type="component" value="Contig Pc00c06"/>
</dbReference>
<dbReference type="GO" id="GO:0005576">
    <property type="term" value="C:extracellular region"/>
    <property type="evidence" value="ECO:0007669"/>
    <property type="project" value="UniProtKB-SubCell"/>
</dbReference>
<dbReference type="GO" id="GO:0004565">
    <property type="term" value="F:beta-galactosidase activity"/>
    <property type="evidence" value="ECO:0007669"/>
    <property type="project" value="UniProtKB-EC"/>
</dbReference>
<dbReference type="GO" id="GO:0000272">
    <property type="term" value="P:polysaccharide catabolic process"/>
    <property type="evidence" value="ECO:0007669"/>
    <property type="project" value="UniProtKB-KW"/>
</dbReference>
<dbReference type="FunFam" id="2.102.20.10:FF:000001">
    <property type="entry name" value="Beta-galactosidase A"/>
    <property type="match status" value="1"/>
</dbReference>
<dbReference type="FunFam" id="2.60.390.10:FF:000001">
    <property type="entry name" value="Beta-galactosidase A"/>
    <property type="match status" value="1"/>
</dbReference>
<dbReference type="FunFam" id="3.20.20.80:FF:000040">
    <property type="entry name" value="Beta-galactosidase A"/>
    <property type="match status" value="1"/>
</dbReference>
<dbReference type="FunFam" id="2.60.120.260:FF:000138">
    <property type="entry name" value="Probable beta-galactosidase B"/>
    <property type="match status" value="1"/>
</dbReference>
<dbReference type="Gene3D" id="2.102.20.10">
    <property type="entry name" value="Beta-galactosidase, domain 2"/>
    <property type="match status" value="1"/>
</dbReference>
<dbReference type="Gene3D" id="2.60.390.10">
    <property type="entry name" value="Beta-galactosidase, domain 3"/>
    <property type="match status" value="1"/>
</dbReference>
<dbReference type="Gene3D" id="2.60.120.260">
    <property type="entry name" value="Galactose-binding domain-like"/>
    <property type="match status" value="2"/>
</dbReference>
<dbReference type="Gene3D" id="3.20.20.80">
    <property type="entry name" value="Glycosidases"/>
    <property type="match status" value="1"/>
</dbReference>
<dbReference type="InterPro" id="IPR018954">
    <property type="entry name" value="Betagal_dom2"/>
</dbReference>
<dbReference type="InterPro" id="IPR037110">
    <property type="entry name" value="Betagal_dom2_sf"/>
</dbReference>
<dbReference type="InterPro" id="IPR025972">
    <property type="entry name" value="BetaGal_dom3"/>
</dbReference>
<dbReference type="InterPro" id="IPR036833">
    <property type="entry name" value="BetaGal_dom3_sf"/>
</dbReference>
<dbReference type="InterPro" id="IPR025300">
    <property type="entry name" value="BetaGal_jelly_roll_dom"/>
</dbReference>
<dbReference type="InterPro" id="IPR008979">
    <property type="entry name" value="Galactose-bd-like_sf"/>
</dbReference>
<dbReference type="InterPro" id="IPR031330">
    <property type="entry name" value="Gly_Hdrlase_35_cat"/>
</dbReference>
<dbReference type="InterPro" id="IPR001944">
    <property type="entry name" value="Glycoside_Hdrlase_35"/>
</dbReference>
<dbReference type="InterPro" id="IPR017853">
    <property type="entry name" value="Glycoside_hydrolase_SF"/>
</dbReference>
<dbReference type="PANTHER" id="PTHR23421">
    <property type="entry name" value="BETA-GALACTOSIDASE RELATED"/>
    <property type="match status" value="1"/>
</dbReference>
<dbReference type="Pfam" id="PF13364">
    <property type="entry name" value="BetaGal_ABD2"/>
    <property type="match status" value="2"/>
</dbReference>
<dbReference type="Pfam" id="PF10435">
    <property type="entry name" value="BetaGal_dom2"/>
    <property type="match status" value="1"/>
</dbReference>
<dbReference type="Pfam" id="PF13363">
    <property type="entry name" value="BetaGal_dom3"/>
    <property type="match status" value="1"/>
</dbReference>
<dbReference type="Pfam" id="PF01301">
    <property type="entry name" value="Glyco_hydro_35"/>
    <property type="match status" value="1"/>
</dbReference>
<dbReference type="PRINTS" id="PR00742">
    <property type="entry name" value="GLHYDRLASE35"/>
</dbReference>
<dbReference type="SMART" id="SM01029">
    <property type="entry name" value="BetaGal_dom2"/>
    <property type="match status" value="1"/>
</dbReference>
<dbReference type="SUPFAM" id="SSF51445">
    <property type="entry name" value="(Trans)glycosidases"/>
    <property type="match status" value="1"/>
</dbReference>
<dbReference type="SUPFAM" id="SSF117100">
    <property type="entry name" value="Beta-galactosidase LacA, domain 3"/>
    <property type="match status" value="1"/>
</dbReference>
<dbReference type="SUPFAM" id="SSF49785">
    <property type="entry name" value="Galactose-binding domain-like"/>
    <property type="match status" value="2"/>
</dbReference>
<dbReference type="SUPFAM" id="SSF51011">
    <property type="entry name" value="Glycosyl hydrolase domain"/>
    <property type="match status" value="1"/>
</dbReference>
<name>BGALB_PENRW</name>
<organism>
    <name type="scientific">Penicillium rubens (strain ATCC 28089 / DSM 1075 / NRRL 1951 / Wisconsin 54-1255)</name>
    <name type="common">Penicillium chrysogenum</name>
    <dbReference type="NCBI Taxonomy" id="500485"/>
    <lineage>
        <taxon>Eukaryota</taxon>
        <taxon>Fungi</taxon>
        <taxon>Dikarya</taxon>
        <taxon>Ascomycota</taxon>
        <taxon>Pezizomycotina</taxon>
        <taxon>Eurotiomycetes</taxon>
        <taxon>Eurotiomycetidae</taxon>
        <taxon>Eurotiales</taxon>
        <taxon>Aspergillaceae</taxon>
        <taxon>Penicillium</taxon>
        <taxon>Penicillium chrysogenum species complex</taxon>
    </lineage>
</organism>
<gene>
    <name type="primary">lacB</name>
    <name type="ORF">Pc06g00600</name>
</gene>
<protein>
    <recommendedName>
        <fullName>Probable beta-galactosidase B</fullName>
        <ecNumber>3.2.1.23</ecNumber>
    </recommendedName>
    <alternativeName>
        <fullName>Lactase B</fullName>
    </alternativeName>
</protein>
<comment type="function">
    <text evidence="1">Cleaves beta-linked terminal galactosyl residues from gangliosides, glycoproteins, and glycosaminoglycans.</text>
</comment>
<comment type="catalytic activity">
    <reaction>
        <text>Hydrolysis of terminal non-reducing beta-D-galactose residues in beta-D-galactosides.</text>
        <dbReference type="EC" id="3.2.1.23"/>
    </reaction>
</comment>
<comment type="subcellular location">
    <subcellularLocation>
        <location evidence="1">Secreted</location>
    </subcellularLocation>
</comment>
<comment type="similarity">
    <text evidence="3">Belongs to the glycosyl hydrolase 35 family.</text>
</comment>
<comment type="sequence caution" evidence="3">
    <conflict type="erroneous gene model prediction">
        <sequence resource="EMBL-CDS" id="CAP79053"/>
    </conflict>
</comment>
<accession>B6GW04</accession>
<sequence>MTRILNCLLVLLACLGVSSKAEDQAVTQWPLQDNGLNTVVQWDHYSFQINGQRIFIFSGEFHYWRIPVPALWRDILEKIKAAGFTAFAFYSSWAYHAPNNATVDFTTGARDITPIFELAKELGMYIIVRPGPYVNAEANAGGFPLWVTTGDYGTLRNDDTRYTNAWTPYFTEVTEITSRYQVTDGHYSIVYQIENEYGNQWLGDPTLRVPNETAIAYMELLKANARDNGITLPLTVNDPNMKTHSWGKDWSDAGGNVDVAGLDSYPSCWTCDISQCTSTNGAYVPFQVLEYHDYFQESQPSMPAFMPEFQGGSYNPWGGPEGGCPGDIGDDFANLFYRWNIGQRVTAMSLYMMFGGQNPGAMAAPVTASSYDYSAPISEDRSIWSKYHETKLLALFTRSAKDLTMTELMGNGTQYTDNPAVRAYELRNPETNSAFYATFHSNTSISTNEPFHLKVNTSAGVLTVPKYASTIRLNGHQSKIIVTDFTFGSKSLLYSTAEVLTYAVFDKKPTLVLWVPTGESGEFSIKGAKKGSIKKCQGCSRVKFIKEHGGLTTSLTQSAGMTVLEFDDGVRVILLDRTSAYDFWAPALTNDPFVPETESVLIQGPYLVRDAKLSGSKLAITGDVVNATTLDVFAPKGVKSVTWNGKKVDTHSTEYGSLKGSLDAPQSIKLPALASWKSKDSLPERFADYDDSGAAWVDANHMTTLNPRTPTSLPVLYADQYGFHNGVRLWRGYFNGTATGAFINVQGGSAFGWSAWLNGEFLASHLGNATTSQANLSLSFTDATLHTDTPNVLLIVHDDTGHDQTTGALNPRGIMDAKLLGSDSGFTHWRLAGTAGGESDLDPVRGVYNEDGLFAERVGWHLPGFDDSDWGEEGSAKDSTTSVLSFEGATVRFFRTTCPLDIPAHTDVSISFVLSTPAGATTEYRAQLFVNGYQYGRYNPYIGNQVVYPVPVGILDYKGENTIGVAVWAQSEEGASIGIDWRVNYLADSSLDVASWDTKDLRPGWTEERVKYA</sequence>
<reference key="1">
    <citation type="journal article" date="2008" name="Nat. Biotechnol.">
        <title>Genome sequencing and analysis of the filamentous fungus Penicillium chrysogenum.</title>
        <authorList>
            <person name="van den Berg M.A."/>
            <person name="Albang R."/>
            <person name="Albermann K."/>
            <person name="Badger J.H."/>
            <person name="Daran J.-M."/>
            <person name="Driessen A.J.M."/>
            <person name="Garcia-Estrada C."/>
            <person name="Fedorova N.D."/>
            <person name="Harris D.M."/>
            <person name="Heijne W.H.M."/>
            <person name="Joardar V.S."/>
            <person name="Kiel J.A.K.W."/>
            <person name="Kovalchuk A."/>
            <person name="Martin J.F."/>
            <person name="Nierman W.C."/>
            <person name="Nijland J.G."/>
            <person name="Pronk J.T."/>
            <person name="Roubos J.A."/>
            <person name="van der Klei I.J."/>
            <person name="van Peij N.N.M.E."/>
            <person name="Veenhuis M."/>
            <person name="von Doehren H."/>
            <person name="Wagner C."/>
            <person name="Wortman J.R."/>
            <person name="Bovenberg R.A.L."/>
        </authorList>
    </citation>
    <scope>NUCLEOTIDE SEQUENCE [LARGE SCALE GENOMIC DNA]</scope>
    <source>
        <strain>ATCC 28089 / DSM 1075 / NRRL 1951 / Wisconsin 54-1255</strain>
    </source>
</reference>
<evidence type="ECO:0000250" key="1"/>
<evidence type="ECO:0000255" key="2"/>
<evidence type="ECO:0000305" key="3"/>
<proteinExistence type="inferred from homology"/>
<feature type="signal peptide" evidence="2">
    <location>
        <begin position="1"/>
        <end position="21"/>
    </location>
</feature>
<feature type="chain" id="PRO_5000408640" description="Probable beta-galactosidase B">
    <location>
        <begin position="22"/>
        <end position="1013"/>
    </location>
</feature>
<feature type="active site" description="Proton donor" evidence="2">
    <location>
        <position position="196"/>
    </location>
</feature>
<feature type="active site" description="Nucleophile" evidence="2">
    <location>
        <position position="308"/>
    </location>
</feature>
<feature type="binding site" evidence="1">
    <location>
        <position position="90"/>
    </location>
    <ligand>
        <name>substrate</name>
    </ligand>
</feature>
<feature type="binding site" evidence="1">
    <location>
        <position position="135"/>
    </location>
    <ligand>
        <name>substrate</name>
    </ligand>
</feature>
<feature type="binding site" evidence="1">
    <location>
        <position position="136"/>
    </location>
    <ligand>
        <name>substrate</name>
    </ligand>
</feature>
<feature type="binding site" evidence="1">
    <location>
        <position position="137"/>
    </location>
    <ligand>
        <name>substrate</name>
    </ligand>
</feature>
<feature type="binding site" evidence="1">
    <location>
        <position position="195"/>
    </location>
    <ligand>
        <name>substrate</name>
    </ligand>
</feature>
<feature type="binding site" evidence="1">
    <location>
        <position position="265"/>
    </location>
    <ligand>
        <name>substrate</name>
    </ligand>
</feature>
<feature type="binding site" evidence="1">
    <location>
        <position position="373"/>
    </location>
    <ligand>
        <name>substrate</name>
    </ligand>
</feature>
<feature type="glycosylation site" description="N-linked (GlcNAc...) asparagine" evidence="2">
    <location>
        <position position="100"/>
    </location>
</feature>
<feature type="glycosylation site" description="N-linked (GlcNAc...) asparagine" evidence="2">
    <location>
        <position position="211"/>
    </location>
</feature>
<feature type="glycosylation site" description="N-linked (GlcNAc...) asparagine" evidence="2">
    <location>
        <position position="411"/>
    </location>
</feature>
<feature type="glycosylation site" description="N-linked (GlcNAc...) asparagine" evidence="2">
    <location>
        <position position="442"/>
    </location>
</feature>
<feature type="glycosylation site" description="N-linked (GlcNAc...) asparagine" evidence="2">
    <location>
        <position position="456"/>
    </location>
</feature>
<feature type="glycosylation site" description="N-linked (GlcNAc...) asparagine" evidence="2">
    <location>
        <position position="626"/>
    </location>
</feature>
<feature type="glycosylation site" description="N-linked (GlcNAc...) asparagine" evidence="2">
    <location>
        <position position="735"/>
    </location>
</feature>
<feature type="glycosylation site" description="N-linked (GlcNAc...) asparagine" evidence="2">
    <location>
        <position position="768"/>
    </location>
</feature>
<feature type="glycosylation site" description="N-linked (GlcNAc...) asparagine" evidence="2">
    <location>
        <position position="775"/>
    </location>
</feature>
<feature type="disulfide bond" evidence="1">
    <location>
        <begin position="271"/>
        <end position="324"/>
    </location>
</feature>
<keyword id="KW-0119">Carbohydrate metabolism</keyword>
<keyword id="KW-1015">Disulfide bond</keyword>
<keyword id="KW-0325">Glycoprotein</keyword>
<keyword id="KW-0326">Glycosidase</keyword>
<keyword id="KW-0378">Hydrolase</keyword>
<keyword id="KW-0624">Polysaccharide degradation</keyword>
<keyword id="KW-1185">Reference proteome</keyword>
<keyword id="KW-0964">Secreted</keyword>
<keyword id="KW-0732">Signal</keyword>